<feature type="initiator methionine" description="Removed" evidence="3 7">
    <location>
        <position position="1"/>
    </location>
</feature>
<feature type="chain" id="PRO_0000070498" description="Photosystem II reaction center protein H">
    <location>
        <begin position="2"/>
        <end position="73"/>
    </location>
</feature>
<feature type="transmembrane region" description="Helical" evidence="1">
    <location>
        <begin position="41"/>
        <end position="61"/>
    </location>
</feature>
<feature type="region of interest" description="Disordered" evidence="2">
    <location>
        <begin position="1"/>
        <end position="20"/>
    </location>
</feature>
<feature type="compositionally biased region" description="Polar residues" evidence="2">
    <location>
        <begin position="1"/>
        <end position="19"/>
    </location>
</feature>
<feature type="modified residue" description="N-acetylalanine" evidence="7">
    <location>
        <position position="2"/>
    </location>
</feature>
<feature type="modified residue" description="Phosphothreonine" evidence="1 3 4 6">
    <location>
        <position position="3"/>
    </location>
</feature>
<feature type="modified residue" description="Phosphothreonine" evidence="1 3 4 6">
    <location>
        <position position="5"/>
    </location>
</feature>
<feature type="helix" evidence="8">
    <location>
        <begin position="18"/>
        <end position="23"/>
    </location>
</feature>
<feature type="helix" evidence="8">
    <location>
        <begin position="25"/>
        <end position="27"/>
    </location>
</feature>
<feature type="strand" evidence="8">
    <location>
        <begin position="30"/>
        <end position="39"/>
    </location>
</feature>
<feature type="helix" evidence="8">
    <location>
        <begin position="40"/>
        <end position="62"/>
    </location>
</feature>
<feature type="turn" evidence="8">
    <location>
        <begin position="67"/>
        <end position="69"/>
    </location>
</feature>
<proteinExistence type="evidence at protein level"/>
<accession>P56780</accession>
<organism>
    <name type="scientific">Arabidopsis thaliana</name>
    <name type="common">Mouse-ear cress</name>
    <dbReference type="NCBI Taxonomy" id="3702"/>
    <lineage>
        <taxon>Eukaryota</taxon>
        <taxon>Viridiplantae</taxon>
        <taxon>Streptophyta</taxon>
        <taxon>Embryophyta</taxon>
        <taxon>Tracheophyta</taxon>
        <taxon>Spermatophyta</taxon>
        <taxon>Magnoliopsida</taxon>
        <taxon>eudicotyledons</taxon>
        <taxon>Gunneridae</taxon>
        <taxon>Pentapetalae</taxon>
        <taxon>rosids</taxon>
        <taxon>malvids</taxon>
        <taxon>Brassicales</taxon>
        <taxon>Brassicaceae</taxon>
        <taxon>Camelineae</taxon>
        <taxon>Arabidopsis</taxon>
    </lineage>
</organism>
<name>PSBH_ARATH</name>
<dbReference type="EMBL" id="AP000423">
    <property type="protein sequence ID" value="BAA84414.1"/>
    <property type="molecule type" value="Genomic_DNA"/>
</dbReference>
<dbReference type="RefSeq" id="NP_051087.1">
    <property type="nucleotide sequence ID" value="NC_000932.1"/>
</dbReference>
<dbReference type="PDB" id="5MDX">
    <property type="method" value="EM"/>
    <property type="resolution" value="5.30 A"/>
    <property type="chains" value="H/h=2-73"/>
</dbReference>
<dbReference type="PDB" id="7OUI">
    <property type="method" value="EM"/>
    <property type="resolution" value="2.79 A"/>
    <property type="chains" value="H/h=2-73"/>
</dbReference>
<dbReference type="PDBsum" id="5MDX"/>
<dbReference type="PDBsum" id="7OUI"/>
<dbReference type="EMDB" id="EMD-13078"/>
<dbReference type="EMDB" id="EMD-3491"/>
<dbReference type="SMR" id="P56780"/>
<dbReference type="BioGRID" id="29936">
    <property type="interactions" value="11"/>
</dbReference>
<dbReference type="FunCoup" id="P56780">
    <property type="interactions" value="360"/>
</dbReference>
<dbReference type="IntAct" id="P56780">
    <property type="interactions" value="2"/>
</dbReference>
<dbReference type="MINT" id="P56780"/>
<dbReference type="STRING" id="3702.P56780"/>
<dbReference type="TCDB" id="3.E.2.2.3">
    <property type="family name" value="the photosynthetic reaction center (prc) family"/>
</dbReference>
<dbReference type="iPTMnet" id="P56780"/>
<dbReference type="PaxDb" id="3702-ATCG00710.1"/>
<dbReference type="ProteomicsDB" id="226329"/>
<dbReference type="EnsemblPlants" id="ATCG00710.1">
    <property type="protein sequence ID" value="ATCG00710.1"/>
    <property type="gene ID" value="ATCG00710"/>
</dbReference>
<dbReference type="GeneID" id="844730"/>
<dbReference type="Gramene" id="ATCG00710.1">
    <property type="protein sequence ID" value="ATCG00710.1"/>
    <property type="gene ID" value="ATCG00710"/>
</dbReference>
<dbReference type="KEGG" id="ath:ArthCp052"/>
<dbReference type="Araport" id="ATCG00710"/>
<dbReference type="TAIR" id="ATCG00710">
    <property type="gene designation" value="PSBH"/>
</dbReference>
<dbReference type="eggNOG" id="ENOG502S8Y7">
    <property type="taxonomic scope" value="Eukaryota"/>
</dbReference>
<dbReference type="HOGENOM" id="CLU_190203_1_0_1"/>
<dbReference type="InParanoid" id="P56780"/>
<dbReference type="OMA" id="APEWETT"/>
<dbReference type="BioCyc" id="MetaCyc:ATCG00710-MONOMER"/>
<dbReference type="PRO" id="PR:P56780"/>
<dbReference type="Proteomes" id="UP000006548">
    <property type="component" value="Chloroplast Pltd"/>
</dbReference>
<dbReference type="ExpressionAtlas" id="P56780">
    <property type="expression patterns" value="baseline and differential"/>
</dbReference>
<dbReference type="GO" id="GO:0009507">
    <property type="term" value="C:chloroplast"/>
    <property type="evidence" value="ECO:0007005"/>
    <property type="project" value="TAIR"/>
</dbReference>
<dbReference type="GO" id="GO:0009534">
    <property type="term" value="C:chloroplast thylakoid"/>
    <property type="evidence" value="ECO:0007005"/>
    <property type="project" value="TAIR"/>
</dbReference>
<dbReference type="GO" id="GO:0009535">
    <property type="term" value="C:chloroplast thylakoid membrane"/>
    <property type="evidence" value="ECO:0007005"/>
    <property type="project" value="TAIR"/>
</dbReference>
<dbReference type="GO" id="GO:0009654">
    <property type="term" value="C:photosystem II oxygen evolving complex"/>
    <property type="evidence" value="ECO:0000304"/>
    <property type="project" value="TAIR"/>
</dbReference>
<dbReference type="GO" id="GO:0009536">
    <property type="term" value="C:plastid"/>
    <property type="evidence" value="ECO:0007005"/>
    <property type="project" value="TAIR"/>
</dbReference>
<dbReference type="GO" id="GO:0009579">
    <property type="term" value="C:thylakoid"/>
    <property type="evidence" value="ECO:0007005"/>
    <property type="project" value="TAIR"/>
</dbReference>
<dbReference type="GO" id="GO:0003729">
    <property type="term" value="F:mRNA binding"/>
    <property type="evidence" value="ECO:0000314"/>
    <property type="project" value="TAIR"/>
</dbReference>
<dbReference type="GO" id="GO:0042301">
    <property type="term" value="F:phosphate ion binding"/>
    <property type="evidence" value="ECO:0007669"/>
    <property type="project" value="InterPro"/>
</dbReference>
<dbReference type="GO" id="GO:0015979">
    <property type="term" value="P:photosynthesis"/>
    <property type="evidence" value="ECO:0007669"/>
    <property type="project" value="UniProtKB-UniRule"/>
</dbReference>
<dbReference type="GO" id="GO:0050821">
    <property type="term" value="P:protein stabilization"/>
    <property type="evidence" value="ECO:0007669"/>
    <property type="project" value="InterPro"/>
</dbReference>
<dbReference type="FunFam" id="1.20.5.880:FF:000001">
    <property type="entry name" value="Photosystem II reaction center protein H"/>
    <property type="match status" value="1"/>
</dbReference>
<dbReference type="Gene3D" id="1.20.5.880">
    <property type="entry name" value="Photosystem II reaction center protein H"/>
    <property type="match status" value="1"/>
</dbReference>
<dbReference type="HAMAP" id="MF_00752">
    <property type="entry name" value="PSII_PsbH"/>
    <property type="match status" value="1"/>
</dbReference>
<dbReference type="InterPro" id="IPR001056">
    <property type="entry name" value="PSII_PsbH"/>
</dbReference>
<dbReference type="InterPro" id="IPR036863">
    <property type="entry name" value="PSII_PsbH_sf"/>
</dbReference>
<dbReference type="NCBIfam" id="NF002728">
    <property type="entry name" value="PRK02624.1"/>
    <property type="match status" value="1"/>
</dbReference>
<dbReference type="PANTHER" id="PTHR34469">
    <property type="entry name" value="PHOTOSYSTEM II REACTION CENTER PROTEIN H"/>
    <property type="match status" value="1"/>
</dbReference>
<dbReference type="PANTHER" id="PTHR34469:SF4">
    <property type="entry name" value="PHOTOSYSTEM II REACTION CENTER PROTEIN H"/>
    <property type="match status" value="1"/>
</dbReference>
<dbReference type="Pfam" id="PF00737">
    <property type="entry name" value="PsbH"/>
    <property type="match status" value="1"/>
</dbReference>
<dbReference type="SUPFAM" id="SSF161025">
    <property type="entry name" value="Photosystem II 10 kDa phosphoprotein PsbH"/>
    <property type="match status" value="1"/>
</dbReference>
<sequence>MATQTVEDSSRSGPRSTTVGKLLKPLNSEYGKVAPGWGTTPLMGVAMALFAVFLSIILEIYNSSVLLDGISVN</sequence>
<protein>
    <recommendedName>
        <fullName evidence="1">Photosystem II reaction center protein H</fullName>
        <shortName evidence="1">PSII-H</shortName>
    </recommendedName>
    <alternativeName>
        <fullName evidence="1">Photosystem II 10 kDa phosphoprotein</fullName>
    </alternativeName>
</protein>
<keyword id="KW-0002">3D-structure</keyword>
<keyword id="KW-0007">Acetylation</keyword>
<keyword id="KW-0150">Chloroplast</keyword>
<keyword id="KW-0903">Direct protein sequencing</keyword>
<keyword id="KW-0472">Membrane</keyword>
<keyword id="KW-0597">Phosphoprotein</keyword>
<keyword id="KW-0602">Photosynthesis</keyword>
<keyword id="KW-0604">Photosystem II</keyword>
<keyword id="KW-0934">Plastid</keyword>
<keyword id="KW-1185">Reference proteome</keyword>
<keyword id="KW-0793">Thylakoid</keyword>
<keyword id="KW-0812">Transmembrane</keyword>
<keyword id="KW-1133">Transmembrane helix</keyword>
<evidence type="ECO:0000255" key="1">
    <source>
        <dbReference type="HAMAP-Rule" id="MF_00752"/>
    </source>
</evidence>
<evidence type="ECO:0000256" key="2">
    <source>
        <dbReference type="SAM" id="MobiDB-lite"/>
    </source>
</evidence>
<evidence type="ECO:0000269" key="3">
    <source>
    </source>
</evidence>
<evidence type="ECO:0000269" key="4">
    <source>
    </source>
</evidence>
<evidence type="ECO:0000269" key="5">
    <source>
    </source>
</evidence>
<evidence type="ECO:0007744" key="6">
    <source>
    </source>
</evidence>
<evidence type="ECO:0007744" key="7">
    <source>
    </source>
</evidence>
<evidence type="ECO:0007829" key="8">
    <source>
        <dbReference type="PDB" id="7OUI"/>
    </source>
</evidence>
<comment type="function">
    <text evidence="1">One of the components of the core complex of photosystem II (PSII), required for its stability and/or assembly. PSII is a light-driven water:plastoquinone oxidoreductase that uses light energy to abstract electrons from H(2)O, generating O(2) and a proton gradient subsequently used for ATP formation. It consists of a core antenna complex that captures photons, and an electron transfer chain that converts photonic excitation into a charge separation.</text>
</comment>
<comment type="subunit">
    <text evidence="1 3 5">PSII is composed of 1 copy each of membrane proteins PsbA, PsbB, PsbC, PsbD, PsbE, PsbF, PsbH, PsbI, PsbJ, PsbK, PsbL, PsbM, PsbT, PsbX, PsbY, PsbZ, Psb30/Ycf12, at least 3 peripheral proteins of the oxygen-evolving complex and a large number of cofactors. It forms dimeric complexes (PubMed:11113141). Interacts with PAM68 (PubMed:20923938).</text>
</comment>
<comment type="subcellular location">
    <subcellularLocation>
        <location evidence="1 3 5">Plastid</location>
        <location evidence="1 3 5">Chloroplast thylakoid membrane</location>
        <topology evidence="1">Single-pass membrane protein</topology>
    </subcellularLocation>
</comment>
<comment type="PTM">
    <text evidence="3 4">Phosphorylation is a light-dependent reaction catalyzed by a membrane-bound kinase. Hyperphosphorylation at Thr-5 is rapidly reversible upon light/dark transitions (PubMed:11113141). Phosphorylation at Thr-5 but not Thr-3 is performed by STN8 (PubMed:16040609). Phosphorylation at Thr-3 is not light-dependent and is probably necessary for subsequent phosphorylation at Thr-5 (PubMed:16040609).</text>
</comment>
<comment type="similarity">
    <text evidence="1">Belongs to the PsbH family.</text>
</comment>
<geneLocation type="chloroplast"/>
<gene>
    <name evidence="1" type="primary">psbH</name>
    <name type="ordered locus">AtCg00710</name>
</gene>
<reference key="1">
    <citation type="journal article" date="1999" name="DNA Res.">
        <title>Complete structure of the chloroplast genome of Arabidopsis thaliana.</title>
        <authorList>
            <person name="Sato S."/>
            <person name="Nakamura Y."/>
            <person name="Kaneko T."/>
            <person name="Asamizu E."/>
            <person name="Tabata S."/>
        </authorList>
    </citation>
    <scope>NUCLEOTIDE SEQUENCE [LARGE SCALE GENOMIC DNA]</scope>
    <source>
        <strain>cv. Columbia</strain>
    </source>
</reference>
<reference key="2">
    <citation type="journal article" date="2001" name="J. Biol. Chem.">
        <title>Mass spectrometric resolution of reversible protein phosphorylation in photosynthetic membranes of Arabidopsis thaliana.</title>
        <authorList>
            <person name="Vener A.V."/>
            <person name="Harms A."/>
            <person name="Sussman M.R."/>
            <person name="Vierstra R.D."/>
        </authorList>
    </citation>
    <scope>PROTEIN SEQUENCE OF 2-11</scope>
    <scope>SUBUNIT</scope>
    <scope>SUBCELLULAR LOCATION</scope>
    <scope>PHOSPHORYLATION AT THR-3 AND THR-5</scope>
    <source>
        <strain>cv. Columbia</strain>
    </source>
</reference>
<reference key="3">
    <citation type="journal article" date="2005" name="J. Biol. Chem.">
        <title>STN8 protein kinase in Arabidopsis thaliana is specific in phosphorylation of photosystem II core proteins.</title>
        <authorList>
            <person name="Vainonen J.P."/>
            <person name="Hansson M."/>
            <person name="Vener A.V."/>
        </authorList>
    </citation>
    <scope>PHOSPHORYLATION AT THR-5 BY STN8 AND AT THR-3</scope>
    <source>
        <strain>cv. Columbia</strain>
    </source>
</reference>
<reference key="4">
    <citation type="journal article" date="2009" name="Plant Physiol.">
        <title>Large-scale Arabidopsis phosphoproteome profiling reveals novel chloroplast kinase substrates and phosphorylation networks.</title>
        <authorList>
            <person name="Reiland S."/>
            <person name="Messerli G."/>
            <person name="Baerenfaller K."/>
            <person name="Gerrits B."/>
            <person name="Endler A."/>
            <person name="Grossmann J."/>
            <person name="Gruissem W."/>
            <person name="Baginsky S."/>
        </authorList>
    </citation>
    <scope>PHOSPHORYLATION [LARGE SCALE ANALYSIS] AT THR-3 AND THR-5</scope>
    <scope>IDENTIFICATION BY MASS SPECTROMETRY [LARGE SCALE ANALYSIS]</scope>
</reference>
<reference key="5">
    <citation type="journal article" date="2010" name="Plant Cell">
        <title>The Arabidopsis thylakoid protein PAM68 is required for efficient D1 biogenesis and photosystem II assembly.</title>
        <authorList>
            <person name="Armbruster U."/>
            <person name="Zuhlke J."/>
            <person name="Rengstl B."/>
            <person name="Kreller R."/>
            <person name="Makarenko E."/>
            <person name="Ruhle T."/>
            <person name="Schunemann D."/>
            <person name="Jahns P."/>
            <person name="Weisshaar B."/>
            <person name="Nickelsen J."/>
            <person name="Leister D."/>
        </authorList>
    </citation>
    <scope>INTERACTION WITH PAM68</scope>
    <scope>SUBUNIT</scope>
    <scope>SUBCELLULAR LOCATION</scope>
</reference>
<reference key="6">
    <citation type="journal article" date="2012" name="Mol. Cell. Proteomics">
        <title>Comparative large-scale characterisation of plant vs. mammal proteins reveals similar and idiosyncratic N-alpha acetylation features.</title>
        <authorList>
            <person name="Bienvenut W.V."/>
            <person name="Sumpton D."/>
            <person name="Martinez A."/>
            <person name="Lilla S."/>
            <person name="Espagne C."/>
            <person name="Meinnel T."/>
            <person name="Giglione C."/>
        </authorList>
    </citation>
    <scope>ACETYLATION [LARGE SCALE ANALYSIS] AT ALA-2</scope>
    <scope>CLEAVAGE OF INITIATOR METHIONINE [LARGE SCALE ANALYSIS]</scope>
    <scope>IDENTIFICATION BY MASS SPECTROMETRY [LARGE SCALE ANALYSIS]</scope>
</reference>